<feature type="chain" id="PRO_0000059799" description="Ig kappa chain V-V region HP R16.7">
    <location>
        <begin position="1"/>
        <end position="108" status="greater than"/>
    </location>
</feature>
<feature type="region of interest" description="Framework-1">
    <location>
        <begin position="1"/>
        <end position="23"/>
    </location>
</feature>
<feature type="region of interest" description="Complementarity-determining-1">
    <location>
        <begin position="24"/>
        <end position="34"/>
    </location>
</feature>
<feature type="region of interest" description="Framework-2">
    <location>
        <begin position="35"/>
        <end position="49"/>
    </location>
</feature>
<feature type="region of interest" description="Complementarity-determining-2">
    <location>
        <begin position="50"/>
        <end position="56"/>
    </location>
</feature>
<feature type="region of interest" description="Framework-3">
    <location>
        <begin position="57"/>
        <end position="88"/>
    </location>
</feature>
<feature type="region of interest" description="Complementarity-determining-3">
    <location>
        <begin position="89"/>
        <end position="97"/>
    </location>
</feature>
<feature type="region of interest" description="Framework-4">
    <location>
        <begin position="98"/>
        <end position="108"/>
    </location>
</feature>
<feature type="disulfide bond" evidence="1">
    <location>
        <begin position="23"/>
        <end position="88"/>
    </location>
</feature>
<feature type="non-terminal residue">
    <location>
        <position position="108"/>
    </location>
</feature>
<comment type="miscellaneous">
    <text>Anti-arsonate hybridoma protein.</text>
</comment>
<proteinExistence type="evidence at protein level"/>
<name>KV5AB_MOUSE</name>
<evidence type="ECO:0000255" key="1">
    <source>
        <dbReference type="PROSITE-ProRule" id="PRU00114"/>
    </source>
</evidence>
<reference key="1">
    <citation type="journal article" date="1981" name="Proc. Natl. Acad. Sci. U.S.A.">
        <title>Complete amino acid sequence of light chain variable regions derived from five monoclonal anti-p-azophenylarsonate antibodies differing with respect to a crossreactive idiotype.</title>
        <authorList>
            <person name="Siegelman M."/>
            <person name="Capra J.D."/>
        </authorList>
    </citation>
    <scope>PROTEIN SEQUENCE</scope>
    <source>
        <strain>A/J</strain>
    </source>
</reference>
<sequence>DIQMTQTTSSLSASLGDRVTISCRASQDISNYLNWYQQKPDGTVKLLIYYTSRLHSGVPSRFSGSGSGTDYSLTISNLEQEDIATYFCQQGNSLPRTFGGGTKLEIKR</sequence>
<protein>
    <recommendedName>
        <fullName>Ig kappa chain V-V region HP R16.7</fullName>
    </recommendedName>
</protein>
<keyword id="KW-0002">3D-structure</keyword>
<keyword id="KW-1064">Adaptive immunity</keyword>
<keyword id="KW-0903">Direct protein sequencing</keyword>
<keyword id="KW-1015">Disulfide bond</keyword>
<keyword id="KW-0391">Immunity</keyword>
<keyword id="KW-1280">Immunoglobulin</keyword>
<keyword id="KW-1185">Reference proteome</keyword>
<accession>P01644</accession>
<organism>
    <name type="scientific">Mus musculus</name>
    <name type="common">Mouse</name>
    <dbReference type="NCBI Taxonomy" id="10090"/>
    <lineage>
        <taxon>Eukaryota</taxon>
        <taxon>Metazoa</taxon>
        <taxon>Chordata</taxon>
        <taxon>Craniata</taxon>
        <taxon>Vertebrata</taxon>
        <taxon>Euteleostomi</taxon>
        <taxon>Mammalia</taxon>
        <taxon>Eutheria</taxon>
        <taxon>Euarchontoglires</taxon>
        <taxon>Glires</taxon>
        <taxon>Rodentia</taxon>
        <taxon>Myomorpha</taxon>
        <taxon>Muroidea</taxon>
        <taxon>Muridae</taxon>
        <taxon>Murinae</taxon>
        <taxon>Mus</taxon>
        <taxon>Mus</taxon>
    </lineage>
</organism>
<dbReference type="PIR" id="A01927">
    <property type="entry name" value="KVMSAR"/>
</dbReference>
<dbReference type="PIR" id="A28044">
    <property type="entry name" value="A28044"/>
</dbReference>
<dbReference type="PIR" id="B26405">
    <property type="entry name" value="B26405"/>
</dbReference>
<dbReference type="PIR" id="B28044">
    <property type="entry name" value="B28044"/>
</dbReference>
<dbReference type="PIR" id="B49026">
    <property type="entry name" value="B49026"/>
</dbReference>
<dbReference type="PIR" id="C26405">
    <property type="entry name" value="C26405"/>
</dbReference>
<dbReference type="PIR" id="D48677">
    <property type="entry name" value="D48677"/>
</dbReference>
<dbReference type="PIR" id="PL0282">
    <property type="entry name" value="PL0282"/>
</dbReference>
<dbReference type="PDB" id="2ZJS">
    <property type="method" value="X-ray"/>
    <property type="resolution" value="3.20 A"/>
    <property type="chains" value="L=1-108"/>
</dbReference>
<dbReference type="PDBsum" id="2ZJS"/>
<dbReference type="SMR" id="P01644"/>
<dbReference type="FunCoup" id="P01644">
    <property type="interactions" value="655"/>
</dbReference>
<dbReference type="InParanoid" id="P01644"/>
<dbReference type="Proteomes" id="UP000000589">
    <property type="component" value="Unplaced"/>
</dbReference>
<dbReference type="RNAct" id="P01644">
    <property type="molecule type" value="protein"/>
</dbReference>
<dbReference type="GO" id="GO:0019814">
    <property type="term" value="C:immunoglobulin complex"/>
    <property type="evidence" value="ECO:0000318"/>
    <property type="project" value="GO_Central"/>
</dbReference>
<dbReference type="GO" id="GO:0002250">
    <property type="term" value="P:adaptive immune response"/>
    <property type="evidence" value="ECO:0007669"/>
    <property type="project" value="UniProtKB-KW"/>
</dbReference>
<dbReference type="GO" id="GO:0006955">
    <property type="term" value="P:immune response"/>
    <property type="evidence" value="ECO:0000318"/>
    <property type="project" value="GO_Central"/>
</dbReference>
<dbReference type="CDD" id="cd04980">
    <property type="entry name" value="IgV_L_kappa"/>
    <property type="match status" value="1"/>
</dbReference>
<dbReference type="FunFam" id="2.60.40.10:FF:000212">
    <property type="entry name" value="Immunoglobulin kappa chain variable 12-38"/>
    <property type="match status" value="1"/>
</dbReference>
<dbReference type="Gene3D" id="2.60.40.10">
    <property type="entry name" value="Immunoglobulins"/>
    <property type="match status" value="1"/>
</dbReference>
<dbReference type="InterPro" id="IPR007110">
    <property type="entry name" value="Ig-like_dom"/>
</dbReference>
<dbReference type="InterPro" id="IPR036179">
    <property type="entry name" value="Ig-like_dom_sf"/>
</dbReference>
<dbReference type="InterPro" id="IPR013783">
    <property type="entry name" value="Ig-like_fold"/>
</dbReference>
<dbReference type="InterPro" id="IPR003599">
    <property type="entry name" value="Ig_sub"/>
</dbReference>
<dbReference type="InterPro" id="IPR013106">
    <property type="entry name" value="Ig_V-set"/>
</dbReference>
<dbReference type="InterPro" id="IPR050150">
    <property type="entry name" value="IgV_Light_Chain"/>
</dbReference>
<dbReference type="PANTHER" id="PTHR23267">
    <property type="entry name" value="IMMUNOGLOBULIN LIGHT CHAIN"/>
    <property type="match status" value="1"/>
</dbReference>
<dbReference type="Pfam" id="PF07686">
    <property type="entry name" value="V-set"/>
    <property type="match status" value="1"/>
</dbReference>
<dbReference type="SMART" id="SM00409">
    <property type="entry name" value="IG"/>
    <property type="match status" value="1"/>
</dbReference>
<dbReference type="SMART" id="SM00406">
    <property type="entry name" value="IGv"/>
    <property type="match status" value="1"/>
</dbReference>
<dbReference type="SUPFAM" id="SSF48726">
    <property type="entry name" value="Immunoglobulin"/>
    <property type="match status" value="1"/>
</dbReference>
<dbReference type="PROSITE" id="PS50835">
    <property type="entry name" value="IG_LIKE"/>
    <property type="match status" value="1"/>
</dbReference>